<keyword id="KW-0028">Amino-acid biosynthesis</keyword>
<keyword id="KW-0963">Cytoplasm</keyword>
<keyword id="KW-0220">Diaminopimelate biosynthesis</keyword>
<keyword id="KW-0456">Lyase</keyword>
<keyword id="KW-0457">Lysine biosynthesis</keyword>
<keyword id="KW-0704">Schiff base</keyword>
<organism>
    <name type="scientific">Escherichia coli O9:H4 (strain HS)</name>
    <dbReference type="NCBI Taxonomy" id="331112"/>
    <lineage>
        <taxon>Bacteria</taxon>
        <taxon>Pseudomonadati</taxon>
        <taxon>Pseudomonadota</taxon>
        <taxon>Gammaproteobacteria</taxon>
        <taxon>Enterobacterales</taxon>
        <taxon>Enterobacteriaceae</taxon>
        <taxon>Escherichia</taxon>
    </lineage>
</organism>
<evidence type="ECO:0000255" key="1">
    <source>
        <dbReference type="HAMAP-Rule" id="MF_00418"/>
    </source>
</evidence>
<evidence type="ECO:0000305" key="2"/>
<dbReference type="EC" id="4.3.3.7" evidence="1"/>
<dbReference type="EMBL" id="CP000802">
    <property type="protein sequence ID" value="ABV06875.1"/>
    <property type="molecule type" value="Genomic_DNA"/>
</dbReference>
<dbReference type="RefSeq" id="WP_001295469.1">
    <property type="nucleotide sequence ID" value="NC_009800.1"/>
</dbReference>
<dbReference type="SMR" id="A8A2X1"/>
<dbReference type="GeneID" id="93774660"/>
<dbReference type="KEGG" id="ecx:EcHS_A2610"/>
<dbReference type="HOGENOM" id="CLU_049343_7_1_6"/>
<dbReference type="UniPathway" id="UPA00034">
    <property type="reaction ID" value="UER00017"/>
</dbReference>
<dbReference type="GO" id="GO:0005829">
    <property type="term" value="C:cytosol"/>
    <property type="evidence" value="ECO:0007669"/>
    <property type="project" value="TreeGrafter"/>
</dbReference>
<dbReference type="GO" id="GO:0008840">
    <property type="term" value="F:4-hydroxy-tetrahydrodipicolinate synthase activity"/>
    <property type="evidence" value="ECO:0007669"/>
    <property type="project" value="UniProtKB-UniRule"/>
</dbReference>
<dbReference type="GO" id="GO:0019877">
    <property type="term" value="P:diaminopimelate biosynthetic process"/>
    <property type="evidence" value="ECO:0007669"/>
    <property type="project" value="UniProtKB-UniRule"/>
</dbReference>
<dbReference type="GO" id="GO:0009089">
    <property type="term" value="P:lysine biosynthetic process via diaminopimelate"/>
    <property type="evidence" value="ECO:0007669"/>
    <property type="project" value="UniProtKB-UniRule"/>
</dbReference>
<dbReference type="CDD" id="cd00950">
    <property type="entry name" value="DHDPS"/>
    <property type="match status" value="1"/>
</dbReference>
<dbReference type="FunFam" id="3.20.20.70:FF:000046">
    <property type="entry name" value="4-hydroxy-tetrahydrodipicolinate synthase"/>
    <property type="match status" value="1"/>
</dbReference>
<dbReference type="Gene3D" id="3.20.20.70">
    <property type="entry name" value="Aldolase class I"/>
    <property type="match status" value="1"/>
</dbReference>
<dbReference type="HAMAP" id="MF_00418">
    <property type="entry name" value="DapA"/>
    <property type="match status" value="1"/>
</dbReference>
<dbReference type="InterPro" id="IPR013785">
    <property type="entry name" value="Aldolase_TIM"/>
</dbReference>
<dbReference type="InterPro" id="IPR005263">
    <property type="entry name" value="DapA"/>
</dbReference>
<dbReference type="InterPro" id="IPR002220">
    <property type="entry name" value="DapA-like"/>
</dbReference>
<dbReference type="InterPro" id="IPR020625">
    <property type="entry name" value="Schiff_base-form_aldolases_AS"/>
</dbReference>
<dbReference type="InterPro" id="IPR020624">
    <property type="entry name" value="Schiff_base-form_aldolases_CS"/>
</dbReference>
<dbReference type="NCBIfam" id="TIGR00674">
    <property type="entry name" value="dapA"/>
    <property type="match status" value="1"/>
</dbReference>
<dbReference type="PANTHER" id="PTHR12128:SF66">
    <property type="entry name" value="4-HYDROXY-2-OXOGLUTARATE ALDOLASE, MITOCHONDRIAL"/>
    <property type="match status" value="1"/>
</dbReference>
<dbReference type="PANTHER" id="PTHR12128">
    <property type="entry name" value="DIHYDRODIPICOLINATE SYNTHASE"/>
    <property type="match status" value="1"/>
</dbReference>
<dbReference type="Pfam" id="PF00701">
    <property type="entry name" value="DHDPS"/>
    <property type="match status" value="1"/>
</dbReference>
<dbReference type="PIRSF" id="PIRSF001365">
    <property type="entry name" value="DHDPS"/>
    <property type="match status" value="1"/>
</dbReference>
<dbReference type="PRINTS" id="PR00146">
    <property type="entry name" value="DHPICSNTHASE"/>
</dbReference>
<dbReference type="SMART" id="SM01130">
    <property type="entry name" value="DHDPS"/>
    <property type="match status" value="1"/>
</dbReference>
<dbReference type="SUPFAM" id="SSF51569">
    <property type="entry name" value="Aldolase"/>
    <property type="match status" value="1"/>
</dbReference>
<dbReference type="PROSITE" id="PS00665">
    <property type="entry name" value="DHDPS_1"/>
    <property type="match status" value="1"/>
</dbReference>
<dbReference type="PROSITE" id="PS00666">
    <property type="entry name" value="DHDPS_2"/>
    <property type="match status" value="1"/>
</dbReference>
<feature type="chain" id="PRO_1000060084" description="4-hydroxy-tetrahydrodipicolinate synthase">
    <location>
        <begin position="1"/>
        <end position="292"/>
    </location>
</feature>
<feature type="active site" description="Proton donor/acceptor" evidence="1">
    <location>
        <position position="133"/>
    </location>
</feature>
<feature type="active site" description="Schiff-base intermediate with substrate" evidence="1">
    <location>
        <position position="161"/>
    </location>
</feature>
<feature type="binding site" evidence="1">
    <location>
        <position position="45"/>
    </location>
    <ligand>
        <name>pyruvate</name>
        <dbReference type="ChEBI" id="CHEBI:15361"/>
    </ligand>
</feature>
<feature type="binding site" evidence="1">
    <location>
        <position position="203"/>
    </location>
    <ligand>
        <name>pyruvate</name>
        <dbReference type="ChEBI" id="CHEBI:15361"/>
    </ligand>
</feature>
<feature type="site" description="Part of a proton relay during catalysis" evidence="1">
    <location>
        <position position="44"/>
    </location>
</feature>
<feature type="site" description="Part of a proton relay during catalysis" evidence="1">
    <location>
        <position position="107"/>
    </location>
</feature>
<name>DAPA_ECOHS</name>
<gene>
    <name evidence="1" type="primary">dapA</name>
    <name type="ordered locus">EcHS_A2610</name>
</gene>
<sequence length="292" mass="31284">MFTGSIVAIVTPMDEKGNVCRASLKKLIDYHVASGTSAIVSVGTTGESATLNHDEHADVVMMTLELADGRIPVIAGTGANATAEAISLTQRFNDSGIVGCLTVTPYYNRPSQEGLYQHFKAIAEHTDLPQILYNVPSRTGCDLLPETVGRLAKVKNIIGIKEATGNLTRVNQIKELVSDDFVLLSGDDASALDFMQLGGHGVISVTANVAARDMAQMCKLAAEGHFAEARVINQRLMPLHNKLFVEPNPIPVKWACKELGLVATDTLRLPMTPITDSGRETVRAALKHAGLL</sequence>
<accession>A8A2X1</accession>
<reference key="1">
    <citation type="journal article" date="2008" name="J. Bacteriol.">
        <title>The pangenome structure of Escherichia coli: comparative genomic analysis of E. coli commensal and pathogenic isolates.</title>
        <authorList>
            <person name="Rasko D.A."/>
            <person name="Rosovitz M.J."/>
            <person name="Myers G.S.A."/>
            <person name="Mongodin E.F."/>
            <person name="Fricke W.F."/>
            <person name="Gajer P."/>
            <person name="Crabtree J."/>
            <person name="Sebaihia M."/>
            <person name="Thomson N.R."/>
            <person name="Chaudhuri R."/>
            <person name="Henderson I.R."/>
            <person name="Sperandio V."/>
            <person name="Ravel J."/>
        </authorList>
    </citation>
    <scope>NUCLEOTIDE SEQUENCE [LARGE SCALE GENOMIC DNA]</scope>
    <source>
        <strain>HS</strain>
    </source>
</reference>
<protein>
    <recommendedName>
        <fullName evidence="1">4-hydroxy-tetrahydrodipicolinate synthase</fullName>
        <shortName evidence="1">HTPA synthase</shortName>
        <ecNumber evidence="1">4.3.3.7</ecNumber>
    </recommendedName>
</protein>
<comment type="function">
    <text evidence="1">Catalyzes the condensation of (S)-aspartate-beta-semialdehyde [(S)-ASA] and pyruvate to 4-hydroxy-tetrahydrodipicolinate (HTPA).</text>
</comment>
<comment type="catalytic activity">
    <reaction evidence="1">
        <text>L-aspartate 4-semialdehyde + pyruvate = (2S,4S)-4-hydroxy-2,3,4,5-tetrahydrodipicolinate + H2O + H(+)</text>
        <dbReference type="Rhea" id="RHEA:34171"/>
        <dbReference type="ChEBI" id="CHEBI:15361"/>
        <dbReference type="ChEBI" id="CHEBI:15377"/>
        <dbReference type="ChEBI" id="CHEBI:15378"/>
        <dbReference type="ChEBI" id="CHEBI:67139"/>
        <dbReference type="ChEBI" id="CHEBI:537519"/>
        <dbReference type="EC" id="4.3.3.7"/>
    </reaction>
</comment>
<comment type="pathway">
    <text evidence="1">Amino-acid biosynthesis; L-lysine biosynthesis via DAP pathway; (S)-tetrahydrodipicolinate from L-aspartate: step 3/4.</text>
</comment>
<comment type="subunit">
    <text evidence="1">Homotetramer; dimer of dimers.</text>
</comment>
<comment type="subcellular location">
    <subcellularLocation>
        <location evidence="1">Cytoplasm</location>
    </subcellularLocation>
</comment>
<comment type="similarity">
    <text evidence="1">Belongs to the DapA family.</text>
</comment>
<comment type="caution">
    <text evidence="2">Was originally thought to be a dihydrodipicolinate synthase (DHDPS), catalyzing the condensation of (S)-aspartate-beta-semialdehyde [(S)-ASA] and pyruvate to dihydrodipicolinate (DHDP). However, it was shown in E.coli that the product of the enzymatic reaction is not dihydrodipicolinate but in fact (4S)-4-hydroxy-2,3,4,5-tetrahydro-(2S)-dipicolinic acid (HTPA), and that the consecutive dehydration reaction leading to DHDP is not spontaneous but catalyzed by DapB.</text>
</comment>
<proteinExistence type="inferred from homology"/>